<sequence length="308" mass="34227">MENKIAPFSYSGSSAGNSSSGGVVSSSLYSDQLYKSTRNIMQQRQDMVNREALCYTRLHEASLEAEALRLENTELRSMNLRLKNELNSLIRSSIQNRFDHRSPLRMLSNLSIGGNDADEVENQNRTVNRDDVNDKSPTSVMENEDLNRSSLPKSISVRSNGYSKASQGGGGAAAQSGKPRGTVTKPGTCGQVSTTQKVYVRGGGKKEDQEEEIEVEVYNQGMTKTELCNKWQETGTCPYGDHCQFAHGIKELRPVIRHPRYKTEVCRMVLAGDNCPYGHRCHFRHSLSEQEKLVAAGFKPKSSLKLIT</sequence>
<dbReference type="EMBL" id="AC016447">
    <property type="protein sequence ID" value="AAG52611.1"/>
    <property type="molecule type" value="Genomic_DNA"/>
</dbReference>
<dbReference type="EMBL" id="CP002684">
    <property type="protein sequence ID" value="AEE34763.1"/>
    <property type="molecule type" value="Genomic_DNA"/>
</dbReference>
<dbReference type="EMBL" id="CP002684">
    <property type="protein sequence ID" value="AEE34764.1"/>
    <property type="molecule type" value="Genomic_DNA"/>
</dbReference>
<dbReference type="EMBL" id="CP002684">
    <property type="protein sequence ID" value="ANM59412.1"/>
    <property type="molecule type" value="Genomic_DNA"/>
</dbReference>
<dbReference type="EMBL" id="CP002684">
    <property type="protein sequence ID" value="ANM59413.1"/>
    <property type="molecule type" value="Genomic_DNA"/>
</dbReference>
<dbReference type="EMBL" id="DQ446410">
    <property type="protein sequence ID" value="ABE65754.1"/>
    <property type="molecule type" value="mRNA"/>
</dbReference>
<dbReference type="EMBL" id="DQ056514">
    <property type="protein sequence ID" value="AAY78670.1"/>
    <property type="molecule type" value="mRNA"/>
</dbReference>
<dbReference type="EMBL" id="BT026077">
    <property type="protein sequence ID" value="ABG48433.1"/>
    <property type="molecule type" value="mRNA"/>
</dbReference>
<dbReference type="PIR" id="D96705">
    <property type="entry name" value="D96705"/>
</dbReference>
<dbReference type="RefSeq" id="NP_001077792.1">
    <molecule id="Q9C9F5-2"/>
    <property type="nucleotide sequence ID" value="NM_001084323.1"/>
</dbReference>
<dbReference type="RefSeq" id="NP_001319344.1">
    <molecule id="Q9C9F5-1"/>
    <property type="nucleotide sequence ID" value="NM_001334354.1"/>
</dbReference>
<dbReference type="RefSeq" id="NP_001319345.1">
    <molecule id="Q9C9F5-2"/>
    <property type="nucleotide sequence ID" value="NM_001334355.1"/>
</dbReference>
<dbReference type="RefSeq" id="NP_176987.1">
    <molecule id="Q9C9F5-1"/>
    <property type="nucleotide sequence ID" value="NM_105491.2"/>
</dbReference>
<dbReference type="SMR" id="Q9C9F5"/>
<dbReference type="FunCoup" id="Q9C9F5">
    <property type="interactions" value="17"/>
</dbReference>
<dbReference type="IntAct" id="Q9C9F5">
    <property type="interactions" value="1"/>
</dbReference>
<dbReference type="STRING" id="3702.Q9C9F5"/>
<dbReference type="iPTMnet" id="Q9C9F5"/>
<dbReference type="PaxDb" id="3702-AT1G68200.1"/>
<dbReference type="EnsemblPlants" id="AT1G68200.1">
    <molecule id="Q9C9F5-1"/>
    <property type="protein sequence ID" value="AT1G68200.1"/>
    <property type="gene ID" value="AT1G68200"/>
</dbReference>
<dbReference type="EnsemblPlants" id="AT1G68200.2">
    <molecule id="Q9C9F5-2"/>
    <property type="protein sequence ID" value="AT1G68200.2"/>
    <property type="gene ID" value="AT1G68200"/>
</dbReference>
<dbReference type="EnsemblPlants" id="AT1G68200.5">
    <molecule id="Q9C9F5-1"/>
    <property type="protein sequence ID" value="AT1G68200.5"/>
    <property type="gene ID" value="AT1G68200"/>
</dbReference>
<dbReference type="EnsemblPlants" id="AT1G68200.6">
    <molecule id="Q9C9F5-2"/>
    <property type="protein sequence ID" value="AT1G68200.6"/>
    <property type="gene ID" value="AT1G68200"/>
</dbReference>
<dbReference type="GeneID" id="843149"/>
<dbReference type="Gramene" id="AT1G68200.1">
    <molecule id="Q9C9F5-1"/>
    <property type="protein sequence ID" value="AT1G68200.1"/>
    <property type="gene ID" value="AT1G68200"/>
</dbReference>
<dbReference type="Gramene" id="AT1G68200.2">
    <molecule id="Q9C9F5-2"/>
    <property type="protein sequence ID" value="AT1G68200.2"/>
    <property type="gene ID" value="AT1G68200"/>
</dbReference>
<dbReference type="Gramene" id="AT1G68200.5">
    <molecule id="Q9C9F5-1"/>
    <property type="protein sequence ID" value="AT1G68200.5"/>
    <property type="gene ID" value="AT1G68200"/>
</dbReference>
<dbReference type="Gramene" id="AT1G68200.6">
    <molecule id="Q9C9F5-2"/>
    <property type="protein sequence ID" value="AT1G68200.6"/>
    <property type="gene ID" value="AT1G68200"/>
</dbReference>
<dbReference type="KEGG" id="ath:AT1G68200"/>
<dbReference type="Araport" id="AT1G68200"/>
<dbReference type="TAIR" id="AT1G68200">
    <property type="gene designation" value="CDM1"/>
</dbReference>
<dbReference type="eggNOG" id="KOG1677">
    <property type="taxonomic scope" value="Eukaryota"/>
</dbReference>
<dbReference type="HOGENOM" id="CLU_050602_0_0_1"/>
<dbReference type="InParanoid" id="Q9C9F5"/>
<dbReference type="OMA" id="GYLKMAQ"/>
<dbReference type="OrthoDB" id="410307at2759"/>
<dbReference type="PhylomeDB" id="Q9C9F5"/>
<dbReference type="PRO" id="PR:Q9C9F5"/>
<dbReference type="Proteomes" id="UP000006548">
    <property type="component" value="Chromosome 1"/>
</dbReference>
<dbReference type="ExpressionAtlas" id="Q9C9F5">
    <property type="expression patterns" value="baseline and differential"/>
</dbReference>
<dbReference type="GO" id="GO:0005737">
    <property type="term" value="C:cytoplasm"/>
    <property type="evidence" value="ECO:0007669"/>
    <property type="project" value="UniProtKB-SubCell"/>
</dbReference>
<dbReference type="GO" id="GO:0005634">
    <property type="term" value="C:nucleus"/>
    <property type="evidence" value="ECO:0007669"/>
    <property type="project" value="UniProtKB-SubCell"/>
</dbReference>
<dbReference type="GO" id="GO:0003700">
    <property type="term" value="F:DNA-binding transcription factor activity"/>
    <property type="evidence" value="ECO:0000250"/>
    <property type="project" value="TAIR"/>
</dbReference>
<dbReference type="GO" id="GO:0003729">
    <property type="term" value="F:mRNA binding"/>
    <property type="evidence" value="ECO:0007669"/>
    <property type="project" value="InterPro"/>
</dbReference>
<dbReference type="GO" id="GO:0000976">
    <property type="term" value="F:transcription cis-regulatory region binding"/>
    <property type="evidence" value="ECO:0000353"/>
    <property type="project" value="TAIR"/>
</dbReference>
<dbReference type="GO" id="GO:0008270">
    <property type="term" value="F:zinc ion binding"/>
    <property type="evidence" value="ECO:0007669"/>
    <property type="project" value="UniProtKB-KW"/>
</dbReference>
<dbReference type="GO" id="GO:0009742">
    <property type="term" value="P:brassinosteroid mediated signaling pathway"/>
    <property type="evidence" value="ECO:0007669"/>
    <property type="project" value="UniProtKB-KW"/>
</dbReference>
<dbReference type="GO" id="GO:0006355">
    <property type="term" value="P:regulation of DNA-templated transcription"/>
    <property type="evidence" value="ECO:0000304"/>
    <property type="project" value="TAIR"/>
</dbReference>
<dbReference type="FunFam" id="4.10.1000.10:FF:000001">
    <property type="entry name" value="zinc finger CCCH domain-containing protein 15-like"/>
    <property type="match status" value="1"/>
</dbReference>
<dbReference type="FunFam" id="4.10.1000.10:FF:000002">
    <property type="entry name" value="Zinc finger protein 36, C3H1 type-like 1"/>
    <property type="match status" value="1"/>
</dbReference>
<dbReference type="Gene3D" id="4.10.1000.10">
    <property type="entry name" value="Zinc finger, CCCH-type"/>
    <property type="match status" value="2"/>
</dbReference>
<dbReference type="InterPro" id="IPR045877">
    <property type="entry name" value="ZFP36-like"/>
</dbReference>
<dbReference type="InterPro" id="IPR000571">
    <property type="entry name" value="Znf_CCCH"/>
</dbReference>
<dbReference type="InterPro" id="IPR036855">
    <property type="entry name" value="Znf_CCCH_sf"/>
</dbReference>
<dbReference type="PANTHER" id="PTHR12547">
    <property type="entry name" value="CCCH ZINC FINGER/TIS11-RELATED"/>
    <property type="match status" value="1"/>
</dbReference>
<dbReference type="PANTHER" id="PTHR12547:SF162">
    <property type="entry name" value="ZINC FINGER CCCH DOMAIN-CONTAINING PROTEIN 15"/>
    <property type="match status" value="1"/>
</dbReference>
<dbReference type="Pfam" id="PF00642">
    <property type="entry name" value="zf-CCCH"/>
    <property type="match status" value="1"/>
</dbReference>
<dbReference type="SMART" id="SM00356">
    <property type="entry name" value="ZnF_C3H1"/>
    <property type="match status" value="2"/>
</dbReference>
<dbReference type="SUPFAM" id="SSF90229">
    <property type="entry name" value="CCCH zinc finger"/>
    <property type="match status" value="2"/>
</dbReference>
<dbReference type="PROSITE" id="PS50103">
    <property type="entry name" value="ZF_C3H1"/>
    <property type="match status" value="2"/>
</dbReference>
<organism>
    <name type="scientific">Arabidopsis thaliana</name>
    <name type="common">Mouse-ear cress</name>
    <dbReference type="NCBI Taxonomy" id="3702"/>
    <lineage>
        <taxon>Eukaryota</taxon>
        <taxon>Viridiplantae</taxon>
        <taxon>Streptophyta</taxon>
        <taxon>Embryophyta</taxon>
        <taxon>Tracheophyta</taxon>
        <taxon>Spermatophyta</taxon>
        <taxon>Magnoliopsida</taxon>
        <taxon>eudicotyledons</taxon>
        <taxon>Gunneridae</taxon>
        <taxon>Pentapetalae</taxon>
        <taxon>rosids</taxon>
        <taxon>malvids</taxon>
        <taxon>Brassicales</taxon>
        <taxon>Brassicaceae</taxon>
        <taxon>Camelineae</taxon>
        <taxon>Arabidopsis</taxon>
    </lineage>
</organism>
<feature type="chain" id="PRO_0000371974" description="Zinc finger CCCH domain-containing protein 15">
    <location>
        <begin position="1"/>
        <end position="308"/>
    </location>
</feature>
<feature type="zinc finger region" description="C3H1-type 1" evidence="2">
    <location>
        <begin position="222"/>
        <end position="250"/>
    </location>
</feature>
<feature type="zinc finger region" description="C3H1-type 2" evidence="2">
    <location>
        <begin position="260"/>
        <end position="288"/>
    </location>
</feature>
<feature type="region of interest" description="Disordered" evidence="3">
    <location>
        <begin position="1"/>
        <end position="21"/>
    </location>
</feature>
<feature type="region of interest" description="Disordered" evidence="3">
    <location>
        <begin position="110"/>
        <end position="190"/>
    </location>
</feature>
<feature type="coiled-coil region" evidence="1">
    <location>
        <begin position="56"/>
        <end position="91"/>
    </location>
</feature>
<feature type="compositionally biased region" description="Low complexity" evidence="3">
    <location>
        <begin position="9"/>
        <end position="21"/>
    </location>
</feature>
<feature type="compositionally biased region" description="Polar residues" evidence="3">
    <location>
        <begin position="148"/>
        <end position="164"/>
    </location>
</feature>
<feature type="modified residue" description="Phosphoserine" evidence="7">
    <location>
        <position position="111"/>
    </location>
</feature>
<feature type="splice variant" id="VSP_037129" description="In isoform 2." evidence="8">
    <location>
        <position position="196"/>
    </location>
</feature>
<comment type="function">
    <text evidence="4 5 6 7">Functions probably as a transcriptional factor that activates genes involved in secondary cell wall biosynthesis (PubMed:25228083, PubMed:25732536). Functions redudantly with C3H14 to regulate secondary cell wall formation (PubMed:25732536). C3H14 and C3H15 have overlapping roles in the regulation of secondary cell wall formation and anther development (PubMed:25732536). C3H14 may contribute more to secondary cell wall thickening while C3H15 could be more important in anther development (PubMed:25732536). May regulate at both the transcriptional and post-transcriptional levels the expression of many genes involved in various biological processes, particularly those associated with cell wall metabolism and pollen development (PubMed:25732536). Involved in the regulation of callose metabolism in male meiocytes, in integrity of newly formed microspores, and promotes male fertility (PubMed:24567187). May be involved in the regulation of the callose synthesis genes CALS5 and CALS12, the potential degradation of callose walls-related genes A6 and MYB80, as well as other putative beta-1,3-glucanase genes (PubMed:24567187). Negatively regulates cell elongation by inhibiting brassinosteroid (BR) signaling (PubMed:35139225). Functions downstream of the BRI1 receptor as a negative regulator in the BR pathway (PubMed:35139225).</text>
</comment>
<comment type="subcellular location">
    <subcellularLocation>
        <location evidence="7">Cytoplasm</location>
    </subcellularLocation>
    <subcellularLocation>
        <location evidence="7">Nucleus</location>
    </subcellularLocation>
    <text evidence="7">Localizes in cytoplasm in the absence of brassinosteroids (BRs). Upon BR perception, C3H15 accumulates in the nucleus.</text>
</comment>
<comment type="alternative products">
    <event type="alternative splicing"/>
    <isoform>
        <id>Q9C9F5-1</id>
        <name>1</name>
        <sequence type="displayed"/>
    </isoform>
    <isoform>
        <id>Q9C9F5-2</id>
        <name>2</name>
        <sequence type="described" ref="VSP_037129"/>
    </isoform>
</comment>
<comment type="tissue specificity">
    <text evidence="4 5 6">Highly expressed in secondary cell wall-forming tissues and the xylem cells of roots (PubMed:25228083). Expressed predominantly in inflorescence stems, flowers and siliques (PubMed:25732536). Highly expressed in the basal portion of stems, where cells are undergoing secondary cell wall thickening (PubMed:25732536). Highly expressed in meiocytes and tapetum from anthers (PubMed:24567187).</text>
</comment>
<comment type="PTM">
    <text evidence="7">Phosphorylated at Ser-111 by ASK7/BIN2 in the cytoplasm in the absence of brassinosteroids (BRs).</text>
</comment>
<comment type="disruption phenotype">
    <text evidence="4 5 6">No visible phenotype under normal growth conditions (PubMed:25228083). The double mutants c3h14 and c3h15 have reductions in stem secondary cell wall thickening and defects in anther development (PubMed:25732536). Callose deposition defects in microspores, and pollen exine formation severely affected, leading to male sterility (PubMed:24567187).</text>
</comment>
<comment type="miscellaneous">
    <text evidence="5 6">Plants overexpressing C3H15 exhibit small and slightly curled leaves, and retarded stem elongations due to cell elongation defect and ectopic secondary cell wall formation (PubMed:25228083). Overexpression of C3H15 results in secondary cell wall thickening in fibers and vessels (PubMed:25732536).</text>
</comment>
<comment type="miscellaneous">
    <molecule>Isoform 2</molecule>
    <text evidence="11">May be due to a competing acceptor splice site.</text>
</comment>
<keyword id="KW-0025">Alternative splicing</keyword>
<keyword id="KW-1070">Brassinosteroid signaling pathway</keyword>
<keyword id="KW-0175">Coiled coil</keyword>
<keyword id="KW-0963">Cytoplasm</keyword>
<keyword id="KW-0238">DNA-binding</keyword>
<keyword id="KW-0479">Metal-binding</keyword>
<keyword id="KW-0539">Nucleus</keyword>
<keyword id="KW-0597">Phosphoprotein</keyword>
<keyword id="KW-1185">Reference proteome</keyword>
<keyword id="KW-0677">Repeat</keyword>
<keyword id="KW-0804">Transcription</keyword>
<keyword id="KW-0805">Transcription regulation</keyword>
<keyword id="KW-0862">Zinc</keyword>
<keyword id="KW-0863">Zinc-finger</keyword>
<accession>Q9C9F5</accession>
<accession>Q1PFF3</accession>
<reference key="1">
    <citation type="journal article" date="2000" name="Nature">
        <title>Sequence and analysis of chromosome 1 of the plant Arabidopsis thaliana.</title>
        <authorList>
            <person name="Theologis A."/>
            <person name="Ecker J.R."/>
            <person name="Palm C.J."/>
            <person name="Federspiel N.A."/>
            <person name="Kaul S."/>
            <person name="White O."/>
            <person name="Alonso J."/>
            <person name="Altafi H."/>
            <person name="Araujo R."/>
            <person name="Bowman C.L."/>
            <person name="Brooks S.Y."/>
            <person name="Buehler E."/>
            <person name="Chan A."/>
            <person name="Chao Q."/>
            <person name="Chen H."/>
            <person name="Cheuk R.F."/>
            <person name="Chin C.W."/>
            <person name="Chung M.K."/>
            <person name="Conn L."/>
            <person name="Conway A.B."/>
            <person name="Conway A.R."/>
            <person name="Creasy T.H."/>
            <person name="Dewar K."/>
            <person name="Dunn P."/>
            <person name="Etgu P."/>
            <person name="Feldblyum T.V."/>
            <person name="Feng J.-D."/>
            <person name="Fong B."/>
            <person name="Fujii C.Y."/>
            <person name="Gill J.E."/>
            <person name="Goldsmith A.D."/>
            <person name="Haas B."/>
            <person name="Hansen N.F."/>
            <person name="Hughes B."/>
            <person name="Huizar L."/>
            <person name="Hunter J.L."/>
            <person name="Jenkins J."/>
            <person name="Johnson-Hopson C."/>
            <person name="Khan S."/>
            <person name="Khaykin E."/>
            <person name="Kim C.J."/>
            <person name="Koo H.L."/>
            <person name="Kremenetskaia I."/>
            <person name="Kurtz D.B."/>
            <person name="Kwan A."/>
            <person name="Lam B."/>
            <person name="Langin-Hooper S."/>
            <person name="Lee A."/>
            <person name="Lee J.M."/>
            <person name="Lenz C.A."/>
            <person name="Li J.H."/>
            <person name="Li Y.-P."/>
            <person name="Lin X."/>
            <person name="Liu S.X."/>
            <person name="Liu Z.A."/>
            <person name="Luros J.S."/>
            <person name="Maiti R."/>
            <person name="Marziali A."/>
            <person name="Militscher J."/>
            <person name="Miranda M."/>
            <person name="Nguyen M."/>
            <person name="Nierman W.C."/>
            <person name="Osborne B.I."/>
            <person name="Pai G."/>
            <person name="Peterson J."/>
            <person name="Pham P.K."/>
            <person name="Rizzo M."/>
            <person name="Rooney T."/>
            <person name="Rowley D."/>
            <person name="Sakano H."/>
            <person name="Salzberg S.L."/>
            <person name="Schwartz J.R."/>
            <person name="Shinn P."/>
            <person name="Southwick A.M."/>
            <person name="Sun H."/>
            <person name="Tallon L.J."/>
            <person name="Tambunga G."/>
            <person name="Toriumi M.J."/>
            <person name="Town C.D."/>
            <person name="Utterback T."/>
            <person name="Van Aken S."/>
            <person name="Vaysberg M."/>
            <person name="Vysotskaia V.S."/>
            <person name="Walker M."/>
            <person name="Wu D."/>
            <person name="Yu G."/>
            <person name="Fraser C.M."/>
            <person name="Venter J.C."/>
            <person name="Davis R.W."/>
        </authorList>
    </citation>
    <scope>NUCLEOTIDE SEQUENCE [LARGE SCALE GENOMIC DNA]</scope>
    <source>
        <strain>cv. Columbia</strain>
    </source>
</reference>
<reference key="2">
    <citation type="journal article" date="2017" name="Plant J.">
        <title>Araport11: a complete reannotation of the Arabidopsis thaliana reference genome.</title>
        <authorList>
            <person name="Cheng C.Y."/>
            <person name="Krishnakumar V."/>
            <person name="Chan A.P."/>
            <person name="Thibaud-Nissen F."/>
            <person name="Schobel S."/>
            <person name="Town C.D."/>
        </authorList>
    </citation>
    <scope>GENOME REANNOTATION</scope>
    <source>
        <strain>cv. Columbia</strain>
    </source>
</reference>
<reference key="3">
    <citation type="journal article" date="2006" name="Plant Biotechnol. J.">
        <title>Simultaneous high-throughput recombinational cloning of open reading frames in closed and open configurations.</title>
        <authorList>
            <person name="Underwood B.A."/>
            <person name="Vanderhaeghen R."/>
            <person name="Whitford R."/>
            <person name="Town C.D."/>
            <person name="Hilson P."/>
        </authorList>
    </citation>
    <scope>NUCLEOTIDE SEQUENCE [LARGE SCALE MRNA] (ISOFORM 2)</scope>
    <source>
        <strain>cv. Columbia</strain>
    </source>
</reference>
<reference key="4">
    <citation type="submission" date="2005-05" db="EMBL/GenBank/DDBJ databases">
        <authorList>
            <person name="Underwood B.A."/>
            <person name="Xiao Y.-L."/>
            <person name="Moskal W.A. Jr."/>
            <person name="Monaghan E.L."/>
            <person name="Wang W."/>
            <person name="Redman J.C."/>
            <person name="Wu H.C."/>
            <person name="Utterback T."/>
            <person name="Town C.D."/>
        </authorList>
    </citation>
    <scope>NUCLEOTIDE SEQUENCE [LARGE SCALE MRNA] (ISOFORM 1)</scope>
    <source>
        <strain>cv. Columbia</strain>
    </source>
</reference>
<reference key="5">
    <citation type="submission" date="2006-07" db="EMBL/GenBank/DDBJ databases">
        <title>Arabidopsis ORF clones.</title>
        <authorList>
            <person name="Quinitio C."/>
            <person name="Chen H."/>
            <person name="Kim C.J."/>
            <person name="Shinn P."/>
            <person name="Ecker J.R."/>
        </authorList>
    </citation>
    <scope>NUCLEOTIDE SEQUENCE [LARGE SCALE MRNA] (ISOFORM 1)</scope>
    <source>
        <strain>cv. Columbia</strain>
    </source>
</reference>
<reference key="6">
    <citation type="journal article" date="2008" name="BMC Genomics">
        <title>Genome-wide analysis of CCCH zinc finger family in Arabidopsis and rice.</title>
        <authorList>
            <person name="Wang D."/>
            <person name="Guo Y."/>
            <person name="Wu C."/>
            <person name="Yang G."/>
            <person name="Li Y."/>
            <person name="Zheng C."/>
        </authorList>
    </citation>
    <scope>NOMENCLATURE</scope>
</reference>
<reference key="7">
    <citation type="journal article" date="2014" name="Plant J.">
        <title>AtC3H14, a plant-specific tandem CCCH zinc-finger protein, binds to its target mRNAs in a sequence-specific manner and affects cell elongation in Arabidopsis thaliana.</title>
        <authorList>
            <person name="Kim W.C."/>
            <person name="Kim J.Y."/>
            <person name="Ko J.H."/>
            <person name="Kang H."/>
            <person name="Kim J."/>
            <person name="Han K.H."/>
        </authorList>
    </citation>
    <scope>FUNCTION</scope>
    <scope>TISSUE SPECIFICITY</scope>
    <scope>DISRUPTION PHENOTYPE</scope>
</reference>
<reference key="8">
    <citation type="journal article" date="2014" name="Plant Physiol.">
        <title>The Arabidopsis CALLOSE DEFECTIVE MICROSPORE1 gene is required for male fertility through regulating callose metabolism during microsporogenesis.</title>
        <authorList>
            <person name="Lu P."/>
            <person name="Chai M."/>
            <person name="Yang J."/>
            <person name="Ning G."/>
            <person name="Wang G."/>
            <person name="Ma H."/>
        </authorList>
    </citation>
    <scope>FUNCTION</scope>
    <scope>TISSUE SPECIFICITY</scope>
    <scope>DISRUPTION PHENOTYPE</scope>
</reference>
<reference key="9">
    <citation type="journal article" date="2015" name="J. Exp. Bot.">
        <title>Arabidopsis C3H14 and C3H15 have overlapping roles in the regulation of secondary wall thickening and anther development.</title>
        <authorList>
            <person name="Chai G."/>
            <person name="Kong Y."/>
            <person name="Zhu M."/>
            <person name="Yu L."/>
            <person name="Qi G."/>
            <person name="Tang X."/>
            <person name="Wang Z."/>
            <person name="Cao Y."/>
            <person name="Yu C."/>
            <person name="Zhou G."/>
        </authorList>
    </citation>
    <scope>FUNCTION</scope>
    <scope>TISSUE SPECIFICITY</scope>
    <scope>DISRUPTION PHENOTYPE</scope>
</reference>
<reference key="10">
    <citation type="journal article" date="2022" name="Plant Physiol.">
        <title>The CCCH zinc finger protein C3H15 negatively regulates cell elongation by inhibiting brassinosteroid signaling.</title>
        <authorList>
            <person name="Chai G."/>
            <person name="Qi G."/>
            <person name="Wang D."/>
            <person name="Zhuang Y."/>
            <person name="Xu H."/>
            <person name="Bai Z."/>
            <person name="Bai M.Y."/>
            <person name="Hu R."/>
            <person name="Wang Z.Y."/>
            <person name="Zhou G."/>
            <person name="Kong Y."/>
        </authorList>
    </citation>
    <scope>FUNCTION</scope>
    <scope>SUBCELLULAR LOCATION</scope>
    <scope>PHOSPHORYLATION AT SER-111</scope>
</reference>
<proteinExistence type="evidence at protein level"/>
<gene>
    <name evidence="9" type="primary">C3H15</name>
    <name evidence="10" type="synonym">CDM1</name>
    <name evidence="12" type="ordered locus">At1g68200</name>
    <name evidence="13" type="ORF">T22E19.17</name>
</gene>
<name>C3H15_ARATH</name>
<protein>
    <recommendedName>
        <fullName evidence="9">Zinc finger CCCH domain-containing protein 15</fullName>
        <shortName evidence="9">AtC3H15</shortName>
    </recommendedName>
    <alternativeName>
        <fullName evidence="10">Protein CALLOSE DEFECTIVE MICROSPORE 1</fullName>
    </alternativeName>
</protein>
<evidence type="ECO:0000255" key="1"/>
<evidence type="ECO:0000255" key="2">
    <source>
        <dbReference type="PROSITE-ProRule" id="PRU00723"/>
    </source>
</evidence>
<evidence type="ECO:0000256" key="3">
    <source>
        <dbReference type="SAM" id="MobiDB-lite"/>
    </source>
</evidence>
<evidence type="ECO:0000269" key="4">
    <source>
    </source>
</evidence>
<evidence type="ECO:0000269" key="5">
    <source>
    </source>
</evidence>
<evidence type="ECO:0000269" key="6">
    <source>
    </source>
</evidence>
<evidence type="ECO:0000269" key="7">
    <source>
    </source>
</evidence>
<evidence type="ECO:0000303" key="8">
    <source>
    </source>
</evidence>
<evidence type="ECO:0000303" key="9">
    <source>
    </source>
</evidence>
<evidence type="ECO:0000303" key="10">
    <source>
    </source>
</evidence>
<evidence type="ECO:0000305" key="11"/>
<evidence type="ECO:0000312" key="12">
    <source>
        <dbReference type="Araport" id="AT1G68200"/>
    </source>
</evidence>
<evidence type="ECO:0000312" key="13">
    <source>
        <dbReference type="EMBL" id="AAG52611.1"/>
    </source>
</evidence>